<dbReference type="EC" id="7.4.2.9" evidence="5"/>
<dbReference type="EMBL" id="AF247635">
    <property type="protein sequence ID" value="AAK58900.1"/>
    <property type="molecule type" value="Genomic_DNA"/>
</dbReference>
<dbReference type="EMBL" id="AM406671">
    <property type="protein sequence ID" value="CAL96971.1"/>
    <property type="molecule type" value="Genomic_DNA"/>
</dbReference>
<dbReference type="RefSeq" id="WP_011834423.1">
    <property type="nucleotide sequence ID" value="NC_009004.1"/>
</dbReference>
<dbReference type="SMR" id="A2RI77"/>
<dbReference type="STRING" id="416870.llmg_0366"/>
<dbReference type="GeneID" id="61108670"/>
<dbReference type="KEGG" id="llm:llmg_0366"/>
<dbReference type="eggNOG" id="COG0444">
    <property type="taxonomic scope" value="Bacteria"/>
</dbReference>
<dbReference type="HOGENOM" id="CLU_000604_1_23_9"/>
<dbReference type="OrthoDB" id="9802264at2"/>
<dbReference type="PhylomeDB" id="A2RI77"/>
<dbReference type="Proteomes" id="UP000000364">
    <property type="component" value="Chromosome"/>
</dbReference>
<dbReference type="GO" id="GO:0005886">
    <property type="term" value="C:plasma membrane"/>
    <property type="evidence" value="ECO:0007669"/>
    <property type="project" value="UniProtKB-SubCell"/>
</dbReference>
<dbReference type="GO" id="GO:0005524">
    <property type="term" value="F:ATP binding"/>
    <property type="evidence" value="ECO:0007669"/>
    <property type="project" value="UniProtKB-KW"/>
</dbReference>
<dbReference type="GO" id="GO:0016887">
    <property type="term" value="F:ATP hydrolysis activity"/>
    <property type="evidence" value="ECO:0007669"/>
    <property type="project" value="InterPro"/>
</dbReference>
<dbReference type="GO" id="GO:0015833">
    <property type="term" value="P:peptide transport"/>
    <property type="evidence" value="ECO:0007669"/>
    <property type="project" value="UniProtKB-KW"/>
</dbReference>
<dbReference type="GO" id="GO:0015031">
    <property type="term" value="P:protein transport"/>
    <property type="evidence" value="ECO:0007669"/>
    <property type="project" value="UniProtKB-KW"/>
</dbReference>
<dbReference type="CDD" id="cd03257">
    <property type="entry name" value="ABC_NikE_OppD_transporters"/>
    <property type="match status" value="1"/>
</dbReference>
<dbReference type="FunFam" id="3.40.50.300:FF:000016">
    <property type="entry name" value="Oligopeptide ABC transporter ATP-binding component"/>
    <property type="match status" value="1"/>
</dbReference>
<dbReference type="Gene3D" id="3.40.50.300">
    <property type="entry name" value="P-loop containing nucleotide triphosphate hydrolases"/>
    <property type="match status" value="1"/>
</dbReference>
<dbReference type="InterPro" id="IPR003593">
    <property type="entry name" value="AAA+_ATPase"/>
</dbReference>
<dbReference type="InterPro" id="IPR050388">
    <property type="entry name" value="ABC_Ni/Peptide_Import"/>
</dbReference>
<dbReference type="InterPro" id="IPR003439">
    <property type="entry name" value="ABC_transporter-like_ATP-bd"/>
</dbReference>
<dbReference type="InterPro" id="IPR013563">
    <property type="entry name" value="Oligopep_ABC_C"/>
</dbReference>
<dbReference type="InterPro" id="IPR027417">
    <property type="entry name" value="P-loop_NTPase"/>
</dbReference>
<dbReference type="NCBIfam" id="TIGR01727">
    <property type="entry name" value="oligo_HPY"/>
    <property type="match status" value="1"/>
</dbReference>
<dbReference type="PANTHER" id="PTHR43297:SF2">
    <property type="entry name" value="DIPEPTIDE TRANSPORT ATP-BINDING PROTEIN DPPD"/>
    <property type="match status" value="1"/>
</dbReference>
<dbReference type="PANTHER" id="PTHR43297">
    <property type="entry name" value="OLIGOPEPTIDE TRANSPORT ATP-BINDING PROTEIN APPD"/>
    <property type="match status" value="1"/>
</dbReference>
<dbReference type="Pfam" id="PF00005">
    <property type="entry name" value="ABC_tran"/>
    <property type="match status" value="1"/>
</dbReference>
<dbReference type="Pfam" id="PF08352">
    <property type="entry name" value="oligo_HPY"/>
    <property type="match status" value="1"/>
</dbReference>
<dbReference type="SMART" id="SM00382">
    <property type="entry name" value="AAA"/>
    <property type="match status" value="1"/>
</dbReference>
<dbReference type="SUPFAM" id="SSF52540">
    <property type="entry name" value="P-loop containing nucleoside triphosphate hydrolases"/>
    <property type="match status" value="1"/>
</dbReference>
<dbReference type="PROSITE" id="PS50893">
    <property type="entry name" value="ABC_TRANSPORTER_2"/>
    <property type="match status" value="1"/>
</dbReference>
<organism>
    <name type="scientific">Lactococcus lactis subsp. cremoris (strain MG1363)</name>
    <dbReference type="NCBI Taxonomy" id="416870"/>
    <lineage>
        <taxon>Bacteria</taxon>
        <taxon>Bacillati</taxon>
        <taxon>Bacillota</taxon>
        <taxon>Bacilli</taxon>
        <taxon>Lactobacillales</taxon>
        <taxon>Streptococcaceae</taxon>
        <taxon>Lactococcus</taxon>
        <taxon>Lactococcus cremoris subsp. cremoris</taxon>
    </lineage>
</organism>
<keyword id="KW-0067">ATP-binding</keyword>
<keyword id="KW-1003">Cell membrane</keyword>
<keyword id="KW-0472">Membrane</keyword>
<keyword id="KW-0547">Nucleotide-binding</keyword>
<keyword id="KW-0571">Peptide transport</keyword>
<keyword id="KW-0653">Protein transport</keyword>
<keyword id="KW-1278">Translocase</keyword>
<keyword id="KW-0813">Transport</keyword>
<protein>
    <recommendedName>
        <fullName evidence="4">Dipeptide transport ATP-binding protein DppD</fullName>
        <ecNumber evidence="5">7.4.2.9</ecNumber>
    </recommendedName>
</protein>
<name>DPPD_LACLM</name>
<comment type="function">
    <text evidence="2 4">Part of the ABC transporter DppABCDF involved in dipeptide transport (PubMed:11409543). Responsible for energy coupling to the transport system (Probable).</text>
</comment>
<comment type="catalytic activity">
    <reaction evidence="5">
        <text>a dipeptide(out) + ATP + H2O = a dipeptide(in) + ADP + phosphate + H(+)</text>
        <dbReference type="Rhea" id="RHEA:23120"/>
        <dbReference type="ChEBI" id="CHEBI:15377"/>
        <dbReference type="ChEBI" id="CHEBI:15378"/>
        <dbReference type="ChEBI" id="CHEBI:30616"/>
        <dbReference type="ChEBI" id="CHEBI:43474"/>
        <dbReference type="ChEBI" id="CHEBI:90799"/>
        <dbReference type="ChEBI" id="CHEBI:456216"/>
        <dbReference type="EC" id="7.4.2.9"/>
    </reaction>
</comment>
<comment type="subunit">
    <text evidence="5">The complex is composed of two ATP-binding proteins (DppD and DppF), two transmembrane proteins (DppB and DppC) and a solute-binding protein (DppA).</text>
</comment>
<comment type="subcellular location">
    <subcellularLocation>
        <location evidence="4">Cell membrane</location>
        <topology evidence="4">Peripheral membrane protein</topology>
    </subcellularLocation>
</comment>
<comment type="similarity">
    <text evidence="4">Belongs to the ABC transporter superfamily.</text>
</comment>
<proteinExistence type="evidence at protein level"/>
<accession>A2RI77</accession>
<accession>Q93QH4</accession>
<reference key="1">
    <citation type="journal article" date="2001" name="Arch. Microbiol.">
        <title>Genetic and functional characterization of dpp genes encoding a dipeptide transport system in Lactococcus lactis.</title>
        <authorList>
            <person name="Sanz Y."/>
            <person name="Lanfermeijer F.C."/>
            <person name="Renault P."/>
            <person name="Bolotin A."/>
            <person name="Konings W.N."/>
            <person name="Poolman B."/>
        </authorList>
    </citation>
    <scope>NUCLEOTIDE SEQUENCE [GENOMIC DNA]</scope>
    <scope>FUNCTION</scope>
    <scope>SUBUNIT</scope>
    <source>
        <strain>MG1363</strain>
    </source>
</reference>
<reference key="2">
    <citation type="journal article" date="2007" name="J. Bacteriol.">
        <title>The complete genome sequence of the lactic acid bacterial paradigm Lactococcus lactis subsp. cremoris MG1363.</title>
        <authorList>
            <person name="Wegmann U."/>
            <person name="O'Connell-Motherway M."/>
            <person name="Zomer A."/>
            <person name="Buist G."/>
            <person name="Shearman C."/>
            <person name="Canchaya C."/>
            <person name="Ventura M."/>
            <person name="Goesmann A."/>
            <person name="Gasson M.J."/>
            <person name="Kuipers O.P."/>
            <person name="van Sinderen D."/>
            <person name="Kok J."/>
        </authorList>
    </citation>
    <scope>NUCLEOTIDE SEQUENCE [LARGE SCALE GENOMIC DNA]</scope>
    <source>
        <strain>MG1363</strain>
    </source>
</reference>
<gene>
    <name evidence="3" type="primary">dppD</name>
    <name evidence="6" type="ordered locus">llmg_0366</name>
</gene>
<feature type="chain" id="PRO_0000452198" description="Dipeptide transport ATP-binding protein DppD">
    <location>
        <begin position="1"/>
        <end position="349"/>
    </location>
</feature>
<feature type="domain" description="ABC transporter" evidence="1">
    <location>
        <begin position="7"/>
        <end position="258"/>
    </location>
</feature>
<feature type="binding site" evidence="1">
    <location>
        <begin position="43"/>
        <end position="50"/>
    </location>
    <ligand>
        <name>ATP</name>
        <dbReference type="ChEBI" id="CHEBI:30616"/>
    </ligand>
</feature>
<sequence>MAEEKVLEVKNLHVNFHTYAGDVKAIRNVSFDLEKGQTLAIVGESGSGKSVTTKTLMGLNAKNAEIPEGELLFKGRNLLDLKEEEWQKIRGNEISMIFQDPMTSLDPTMRIGKQIAEPLLKHNKGMSKADAMKRALELMQQVGIPDAEVHINDYPHQWSGGMRQRAVIAIALAADPEILIADEPTTALDVTIQAQIMHMMAELQERINSSIVFITHDLGVVAGFAHKVAVMYAGEIVEYGTVEEIFYNPQHPYTWGLLDSMPTVDSSVDRLVSIPGTPPDLLNPPKGDAFAARNKFALAIDFEEEPPYFEVSPTHFAKTWLLDPRAPKVTPSDNILARWKRWEELKGDK</sequence>
<evidence type="ECO:0000255" key="1">
    <source>
        <dbReference type="PROSITE-ProRule" id="PRU00434"/>
    </source>
</evidence>
<evidence type="ECO:0000269" key="2">
    <source>
    </source>
</evidence>
<evidence type="ECO:0000303" key="3">
    <source>
    </source>
</evidence>
<evidence type="ECO:0000305" key="4"/>
<evidence type="ECO:0000305" key="5">
    <source>
    </source>
</evidence>
<evidence type="ECO:0000312" key="6">
    <source>
        <dbReference type="EMBL" id="CAL96971.1"/>
    </source>
</evidence>